<comment type="function">
    <text evidence="1">Involved in the gluconeogenesis. Catalyzes the conversion of oxaloacetate (OAA) to phosphoenolpyruvate (PEP) through direct phosphoryl transfer between the nucleoside triphosphate and OAA.</text>
</comment>
<comment type="catalytic activity">
    <reaction evidence="1">
        <text>oxaloacetate + ATP = phosphoenolpyruvate + ADP + CO2</text>
        <dbReference type="Rhea" id="RHEA:18617"/>
        <dbReference type="ChEBI" id="CHEBI:16452"/>
        <dbReference type="ChEBI" id="CHEBI:16526"/>
        <dbReference type="ChEBI" id="CHEBI:30616"/>
        <dbReference type="ChEBI" id="CHEBI:58702"/>
        <dbReference type="ChEBI" id="CHEBI:456216"/>
        <dbReference type="EC" id="4.1.1.49"/>
    </reaction>
</comment>
<comment type="cofactor">
    <cofactor evidence="1">
        <name>Mn(2+)</name>
        <dbReference type="ChEBI" id="CHEBI:29035"/>
    </cofactor>
    <text evidence="1">Binds 1 Mn(2+) ion per subunit.</text>
</comment>
<comment type="pathway">
    <text evidence="1">Carbohydrate biosynthesis; gluconeogenesis.</text>
</comment>
<comment type="subunit">
    <text evidence="1">Monomer.</text>
</comment>
<comment type="subcellular location">
    <subcellularLocation>
        <location evidence="1">Cytoplasm</location>
    </subcellularLocation>
</comment>
<comment type="similarity">
    <text evidence="1">Belongs to the phosphoenolpyruvate carboxykinase (ATP) family.</text>
</comment>
<proteinExistence type="inferred from homology"/>
<dbReference type="EC" id="4.1.1.49" evidence="1"/>
<dbReference type="EMBL" id="AL513382">
    <property type="protein sequence ID" value="CAD08114.1"/>
    <property type="molecule type" value="Genomic_DNA"/>
</dbReference>
<dbReference type="EMBL" id="AE014613">
    <property type="protein sequence ID" value="AAO71476.1"/>
    <property type="molecule type" value="Genomic_DNA"/>
</dbReference>
<dbReference type="RefSeq" id="NP_458404.1">
    <property type="nucleotide sequence ID" value="NC_003198.1"/>
</dbReference>
<dbReference type="RefSeq" id="WP_001265689.1">
    <property type="nucleotide sequence ID" value="NZ_WSUR01000001.1"/>
</dbReference>
<dbReference type="SMR" id="Q8Z216"/>
<dbReference type="STRING" id="220341.gene:17588127"/>
<dbReference type="KEGG" id="stt:t4006"/>
<dbReference type="KEGG" id="sty:STY4296"/>
<dbReference type="PATRIC" id="fig|220341.7.peg.4390"/>
<dbReference type="eggNOG" id="COG1866">
    <property type="taxonomic scope" value="Bacteria"/>
</dbReference>
<dbReference type="HOGENOM" id="CLU_018247_0_1_6"/>
<dbReference type="OMA" id="MRYAGEM"/>
<dbReference type="OrthoDB" id="9806325at2"/>
<dbReference type="UniPathway" id="UPA00138"/>
<dbReference type="Proteomes" id="UP000000541">
    <property type="component" value="Chromosome"/>
</dbReference>
<dbReference type="Proteomes" id="UP000002670">
    <property type="component" value="Chromosome"/>
</dbReference>
<dbReference type="GO" id="GO:0005829">
    <property type="term" value="C:cytosol"/>
    <property type="evidence" value="ECO:0007669"/>
    <property type="project" value="TreeGrafter"/>
</dbReference>
<dbReference type="GO" id="GO:0005524">
    <property type="term" value="F:ATP binding"/>
    <property type="evidence" value="ECO:0007669"/>
    <property type="project" value="UniProtKB-UniRule"/>
</dbReference>
<dbReference type="GO" id="GO:0046872">
    <property type="term" value="F:metal ion binding"/>
    <property type="evidence" value="ECO:0007669"/>
    <property type="project" value="UniProtKB-KW"/>
</dbReference>
<dbReference type="GO" id="GO:0004612">
    <property type="term" value="F:phosphoenolpyruvate carboxykinase (ATP) activity"/>
    <property type="evidence" value="ECO:0007669"/>
    <property type="project" value="UniProtKB-UniRule"/>
</dbReference>
<dbReference type="GO" id="GO:0006094">
    <property type="term" value="P:gluconeogenesis"/>
    <property type="evidence" value="ECO:0007669"/>
    <property type="project" value="UniProtKB-UniRule"/>
</dbReference>
<dbReference type="CDD" id="cd00484">
    <property type="entry name" value="PEPCK_ATP"/>
    <property type="match status" value="1"/>
</dbReference>
<dbReference type="FunFam" id="2.170.8.10:FF:000001">
    <property type="entry name" value="Phosphoenolpyruvate carboxykinase (ATP)"/>
    <property type="match status" value="1"/>
</dbReference>
<dbReference type="FunFam" id="3.40.449.10:FF:000001">
    <property type="entry name" value="Phosphoenolpyruvate carboxykinase (ATP)"/>
    <property type="match status" value="1"/>
</dbReference>
<dbReference type="Gene3D" id="3.90.228.20">
    <property type="match status" value="1"/>
</dbReference>
<dbReference type="Gene3D" id="3.40.449.10">
    <property type="entry name" value="Phosphoenolpyruvate Carboxykinase, domain 1"/>
    <property type="match status" value="1"/>
</dbReference>
<dbReference type="Gene3D" id="2.170.8.10">
    <property type="entry name" value="Phosphoenolpyruvate Carboxykinase, domain 2"/>
    <property type="match status" value="1"/>
</dbReference>
<dbReference type="HAMAP" id="MF_00453">
    <property type="entry name" value="PEPCK_ATP"/>
    <property type="match status" value="1"/>
</dbReference>
<dbReference type="InterPro" id="IPR001272">
    <property type="entry name" value="PEP_carboxykinase_ATP"/>
</dbReference>
<dbReference type="InterPro" id="IPR013035">
    <property type="entry name" value="PEP_carboxykinase_C"/>
</dbReference>
<dbReference type="InterPro" id="IPR008210">
    <property type="entry name" value="PEP_carboxykinase_N"/>
</dbReference>
<dbReference type="InterPro" id="IPR015994">
    <property type="entry name" value="PEPCK_ATP_CS"/>
</dbReference>
<dbReference type="NCBIfam" id="TIGR00224">
    <property type="entry name" value="pckA"/>
    <property type="match status" value="1"/>
</dbReference>
<dbReference type="NCBIfam" id="NF006819">
    <property type="entry name" value="PRK09344.1-1"/>
    <property type="match status" value="1"/>
</dbReference>
<dbReference type="NCBIfam" id="NF006820">
    <property type="entry name" value="PRK09344.1-2"/>
    <property type="match status" value="1"/>
</dbReference>
<dbReference type="NCBIfam" id="NF006821">
    <property type="entry name" value="PRK09344.1-3"/>
    <property type="match status" value="1"/>
</dbReference>
<dbReference type="PANTHER" id="PTHR30031:SF0">
    <property type="entry name" value="PHOSPHOENOLPYRUVATE CARBOXYKINASE (ATP)"/>
    <property type="match status" value="1"/>
</dbReference>
<dbReference type="PANTHER" id="PTHR30031">
    <property type="entry name" value="PHOSPHOENOLPYRUVATE CARBOXYKINASE ATP"/>
    <property type="match status" value="1"/>
</dbReference>
<dbReference type="Pfam" id="PF01293">
    <property type="entry name" value="PEPCK_ATP"/>
    <property type="match status" value="1"/>
</dbReference>
<dbReference type="PIRSF" id="PIRSF006294">
    <property type="entry name" value="PEP_crbxkin"/>
    <property type="match status" value="1"/>
</dbReference>
<dbReference type="SUPFAM" id="SSF68923">
    <property type="entry name" value="PEP carboxykinase N-terminal domain"/>
    <property type="match status" value="1"/>
</dbReference>
<dbReference type="SUPFAM" id="SSF53795">
    <property type="entry name" value="PEP carboxykinase-like"/>
    <property type="match status" value="1"/>
</dbReference>
<dbReference type="PROSITE" id="PS00532">
    <property type="entry name" value="PEPCK_ATP"/>
    <property type="match status" value="1"/>
</dbReference>
<reference key="1">
    <citation type="journal article" date="2001" name="Nature">
        <title>Complete genome sequence of a multiple drug resistant Salmonella enterica serovar Typhi CT18.</title>
        <authorList>
            <person name="Parkhill J."/>
            <person name="Dougan G."/>
            <person name="James K.D."/>
            <person name="Thomson N.R."/>
            <person name="Pickard D."/>
            <person name="Wain J."/>
            <person name="Churcher C.M."/>
            <person name="Mungall K.L."/>
            <person name="Bentley S.D."/>
            <person name="Holden M.T.G."/>
            <person name="Sebaihia M."/>
            <person name="Baker S."/>
            <person name="Basham D."/>
            <person name="Brooks K."/>
            <person name="Chillingworth T."/>
            <person name="Connerton P."/>
            <person name="Cronin A."/>
            <person name="Davis P."/>
            <person name="Davies R.M."/>
            <person name="Dowd L."/>
            <person name="White N."/>
            <person name="Farrar J."/>
            <person name="Feltwell T."/>
            <person name="Hamlin N."/>
            <person name="Haque A."/>
            <person name="Hien T.T."/>
            <person name="Holroyd S."/>
            <person name="Jagels K."/>
            <person name="Krogh A."/>
            <person name="Larsen T.S."/>
            <person name="Leather S."/>
            <person name="Moule S."/>
            <person name="O'Gaora P."/>
            <person name="Parry C."/>
            <person name="Quail M.A."/>
            <person name="Rutherford K.M."/>
            <person name="Simmonds M."/>
            <person name="Skelton J."/>
            <person name="Stevens K."/>
            <person name="Whitehead S."/>
            <person name="Barrell B.G."/>
        </authorList>
    </citation>
    <scope>NUCLEOTIDE SEQUENCE [LARGE SCALE GENOMIC DNA]</scope>
    <source>
        <strain>CT18</strain>
    </source>
</reference>
<reference key="2">
    <citation type="journal article" date="2003" name="J. Bacteriol.">
        <title>Comparative genomics of Salmonella enterica serovar Typhi strains Ty2 and CT18.</title>
        <authorList>
            <person name="Deng W."/>
            <person name="Liou S.-R."/>
            <person name="Plunkett G. III"/>
            <person name="Mayhew G.F."/>
            <person name="Rose D.J."/>
            <person name="Burland V."/>
            <person name="Kodoyianni V."/>
            <person name="Schwartz D.C."/>
            <person name="Blattner F.R."/>
        </authorList>
    </citation>
    <scope>NUCLEOTIDE SEQUENCE [LARGE SCALE GENOMIC DNA]</scope>
    <source>
        <strain>ATCC 700931 / Ty2</strain>
    </source>
</reference>
<keyword id="KW-0067">ATP-binding</keyword>
<keyword id="KW-0963">Cytoplasm</keyword>
<keyword id="KW-0210">Decarboxylase</keyword>
<keyword id="KW-0312">Gluconeogenesis</keyword>
<keyword id="KW-0456">Lyase</keyword>
<keyword id="KW-0464">Manganese</keyword>
<keyword id="KW-0479">Metal-binding</keyword>
<keyword id="KW-0547">Nucleotide-binding</keyword>
<feature type="chain" id="PRO_0000203839" description="Phosphoenolpyruvate carboxykinase (ATP)">
    <location>
        <begin position="1"/>
        <end position="539"/>
    </location>
</feature>
<feature type="binding site" evidence="1">
    <location>
        <position position="64"/>
    </location>
    <ligand>
        <name>substrate</name>
    </ligand>
</feature>
<feature type="binding site" evidence="1">
    <location>
        <position position="206"/>
    </location>
    <ligand>
        <name>substrate</name>
    </ligand>
</feature>
<feature type="binding site" evidence="1">
    <location>
        <position position="212"/>
    </location>
    <ligand>
        <name>ATP</name>
        <dbReference type="ChEBI" id="CHEBI:30616"/>
    </ligand>
</feature>
<feature type="binding site" evidence="1">
    <location>
        <position position="212"/>
    </location>
    <ligand>
        <name>Mn(2+)</name>
        <dbReference type="ChEBI" id="CHEBI:29035"/>
    </ligand>
</feature>
<feature type="binding site" evidence="1">
    <location>
        <position position="212"/>
    </location>
    <ligand>
        <name>substrate</name>
    </ligand>
</feature>
<feature type="binding site" evidence="1">
    <location>
        <position position="231"/>
    </location>
    <ligand>
        <name>ATP</name>
        <dbReference type="ChEBI" id="CHEBI:30616"/>
    </ligand>
</feature>
<feature type="binding site" evidence="1">
    <location>
        <position position="231"/>
    </location>
    <ligand>
        <name>Mn(2+)</name>
        <dbReference type="ChEBI" id="CHEBI:29035"/>
    </ligand>
</feature>
<feature type="binding site" evidence="1">
    <location>
        <begin position="247"/>
        <end position="255"/>
    </location>
    <ligand>
        <name>ATP</name>
        <dbReference type="ChEBI" id="CHEBI:30616"/>
    </ligand>
</feature>
<feature type="binding site" evidence="1">
    <location>
        <position position="268"/>
    </location>
    <ligand>
        <name>Mn(2+)</name>
        <dbReference type="ChEBI" id="CHEBI:29035"/>
    </ligand>
</feature>
<feature type="binding site" evidence="1">
    <location>
        <position position="296"/>
    </location>
    <ligand>
        <name>ATP</name>
        <dbReference type="ChEBI" id="CHEBI:30616"/>
    </ligand>
</feature>
<feature type="binding site" evidence="1">
    <location>
        <position position="332"/>
    </location>
    <ligand>
        <name>ATP</name>
        <dbReference type="ChEBI" id="CHEBI:30616"/>
    </ligand>
</feature>
<feature type="binding site" evidence="1">
    <location>
        <position position="332"/>
    </location>
    <ligand>
        <name>substrate</name>
    </ligand>
</feature>
<feature type="binding site" evidence="1">
    <location>
        <begin position="448"/>
        <end position="449"/>
    </location>
    <ligand>
        <name>ATP</name>
        <dbReference type="ChEBI" id="CHEBI:30616"/>
    </ligand>
</feature>
<feature type="binding site" evidence="1">
    <location>
        <position position="454"/>
    </location>
    <ligand>
        <name>ATP</name>
        <dbReference type="ChEBI" id="CHEBI:30616"/>
    </ligand>
</feature>
<name>PCKA_SALTI</name>
<gene>
    <name evidence="1" type="primary">pckA</name>
    <name type="ordered locus">STY4296</name>
    <name type="ordered locus">t4006</name>
</gene>
<organism>
    <name type="scientific">Salmonella typhi</name>
    <dbReference type="NCBI Taxonomy" id="90370"/>
    <lineage>
        <taxon>Bacteria</taxon>
        <taxon>Pseudomonadati</taxon>
        <taxon>Pseudomonadota</taxon>
        <taxon>Gammaproteobacteria</taxon>
        <taxon>Enterobacterales</taxon>
        <taxon>Enterobacteriaceae</taxon>
        <taxon>Salmonella</taxon>
    </lineage>
</organism>
<evidence type="ECO:0000255" key="1">
    <source>
        <dbReference type="HAMAP-Rule" id="MF_00453"/>
    </source>
</evidence>
<sequence>MRVNNLTPQDLKAYGINDVQDIVYNPSYDTLYQEELNPGLEGYERGVLTNLGAVAVDTGIFTGRSPKDKYIVRDDTTRDTLWWSDKGKGKNDNKPLSQETWQHLKGLVTHQLSGKRLFIVDAFCGANADTRLSVRFITEVAWQAHFVKNMFIRPTDEELVGFKPDFIVMNGAKCTNPQWKEQGLNSENFVAFNLTERIQLIGGTWYGGEMKKGMFSVMNYLLPLKGIASMHCSANVGEKGDVAVFFGLSGTGKTTLSTDPKRRLIGDDEHGWDDDGVFNFEGGCYAKTIKLSKEAEPEIYHAIRRDALLENVTVREDGTVDFDDGSKTENTRVSYPIYHIDNIVKPVSKAGHATKVIFLTADAFGVLPPVSRLTANQTQYHFLSGFTAKLAGTERGVTEPTPTFSACFGAAFLTLHPTQYAEVLVKRMQAAGAQAYLVNTGWNGTGKRISIKDTRAIIDAILNGSLDNAETFRLPLFDLAIPTELPGVDTHILDPRNTYASPEQWQEKATALAKLFIENFEKYTDTPAGEALVSAGPKL</sequence>
<protein>
    <recommendedName>
        <fullName evidence="1">Phosphoenolpyruvate carboxykinase (ATP)</fullName>
        <shortName evidence="1">PCK</shortName>
        <shortName evidence="1">PEP carboxykinase</shortName>
        <shortName evidence="1">PEPCK</shortName>
        <ecNumber evidence="1">4.1.1.49</ecNumber>
    </recommendedName>
</protein>
<accession>Q8Z216</accession>